<proteinExistence type="inferred from homology"/>
<organism>
    <name type="scientific">Chromohalobacter salexigens (strain ATCC BAA-138 / DSM 3043 / CIP 106854 / NCIMB 13768 / 1H11)</name>
    <dbReference type="NCBI Taxonomy" id="290398"/>
    <lineage>
        <taxon>Bacteria</taxon>
        <taxon>Pseudomonadati</taxon>
        <taxon>Pseudomonadota</taxon>
        <taxon>Gammaproteobacteria</taxon>
        <taxon>Oceanospirillales</taxon>
        <taxon>Halomonadaceae</taxon>
        <taxon>Chromohalobacter</taxon>
    </lineage>
</organism>
<reference key="1">
    <citation type="journal article" date="2011" name="Stand. Genomic Sci.">
        <title>Complete genome sequence of the halophilic and highly halotolerant Chromohalobacter salexigens type strain (1H11(T)).</title>
        <authorList>
            <person name="Copeland A."/>
            <person name="O'Connor K."/>
            <person name="Lucas S."/>
            <person name="Lapidus A."/>
            <person name="Berry K.W."/>
            <person name="Detter J.C."/>
            <person name="Del Rio T.G."/>
            <person name="Hammon N."/>
            <person name="Dalin E."/>
            <person name="Tice H."/>
            <person name="Pitluck S."/>
            <person name="Bruce D."/>
            <person name="Goodwin L."/>
            <person name="Han C."/>
            <person name="Tapia R."/>
            <person name="Saunders E."/>
            <person name="Schmutz J."/>
            <person name="Brettin T."/>
            <person name="Larimer F."/>
            <person name="Land M."/>
            <person name="Hauser L."/>
            <person name="Vargas C."/>
            <person name="Nieto J.J."/>
            <person name="Kyrpides N.C."/>
            <person name="Ivanova N."/>
            <person name="Goker M."/>
            <person name="Klenk H.P."/>
            <person name="Csonka L.N."/>
            <person name="Woyke T."/>
        </authorList>
    </citation>
    <scope>NUCLEOTIDE SEQUENCE [LARGE SCALE GENOMIC DNA]</scope>
    <source>
        <strain>ATCC BAA-138 / DSM 3043 / CIP 106854 / NCIMB 13768 / 1H11</strain>
    </source>
</reference>
<gene>
    <name evidence="1" type="primary">nuoH</name>
    <name type="ordered locus">Csal_3126</name>
</gene>
<dbReference type="EC" id="7.1.1.-" evidence="1"/>
<dbReference type="EMBL" id="CP000285">
    <property type="protein sequence ID" value="ABE60470.1"/>
    <property type="molecule type" value="Genomic_DNA"/>
</dbReference>
<dbReference type="RefSeq" id="WP_011508416.1">
    <property type="nucleotide sequence ID" value="NC_007963.1"/>
</dbReference>
<dbReference type="SMR" id="Q1QST8"/>
<dbReference type="STRING" id="290398.Csal_3126"/>
<dbReference type="GeneID" id="95335821"/>
<dbReference type="KEGG" id="csa:Csal_3126"/>
<dbReference type="eggNOG" id="COG1005">
    <property type="taxonomic scope" value="Bacteria"/>
</dbReference>
<dbReference type="HOGENOM" id="CLU_015134_0_1_6"/>
<dbReference type="OrthoDB" id="9803734at2"/>
<dbReference type="Proteomes" id="UP000000239">
    <property type="component" value="Chromosome"/>
</dbReference>
<dbReference type="GO" id="GO:0005886">
    <property type="term" value="C:plasma membrane"/>
    <property type="evidence" value="ECO:0007669"/>
    <property type="project" value="UniProtKB-SubCell"/>
</dbReference>
<dbReference type="GO" id="GO:0003954">
    <property type="term" value="F:NADH dehydrogenase activity"/>
    <property type="evidence" value="ECO:0007669"/>
    <property type="project" value="TreeGrafter"/>
</dbReference>
<dbReference type="GO" id="GO:0016655">
    <property type="term" value="F:oxidoreductase activity, acting on NAD(P)H, quinone or similar compound as acceptor"/>
    <property type="evidence" value="ECO:0007669"/>
    <property type="project" value="UniProtKB-UniRule"/>
</dbReference>
<dbReference type="GO" id="GO:0048038">
    <property type="term" value="F:quinone binding"/>
    <property type="evidence" value="ECO:0007669"/>
    <property type="project" value="UniProtKB-KW"/>
</dbReference>
<dbReference type="GO" id="GO:0009060">
    <property type="term" value="P:aerobic respiration"/>
    <property type="evidence" value="ECO:0007669"/>
    <property type="project" value="TreeGrafter"/>
</dbReference>
<dbReference type="HAMAP" id="MF_01350">
    <property type="entry name" value="NDH1_NuoH"/>
    <property type="match status" value="1"/>
</dbReference>
<dbReference type="InterPro" id="IPR001694">
    <property type="entry name" value="NADH_UbQ_OxRdtase_su1/FPO"/>
</dbReference>
<dbReference type="InterPro" id="IPR018086">
    <property type="entry name" value="NADH_UbQ_OxRdtase_su1_CS"/>
</dbReference>
<dbReference type="NCBIfam" id="NF004740">
    <property type="entry name" value="PRK06076.1-1"/>
    <property type="match status" value="1"/>
</dbReference>
<dbReference type="NCBIfam" id="NF004741">
    <property type="entry name" value="PRK06076.1-2"/>
    <property type="match status" value="1"/>
</dbReference>
<dbReference type="PANTHER" id="PTHR11432">
    <property type="entry name" value="NADH DEHYDROGENASE SUBUNIT 1"/>
    <property type="match status" value="1"/>
</dbReference>
<dbReference type="PANTHER" id="PTHR11432:SF3">
    <property type="entry name" value="NADH-UBIQUINONE OXIDOREDUCTASE CHAIN 1"/>
    <property type="match status" value="1"/>
</dbReference>
<dbReference type="Pfam" id="PF00146">
    <property type="entry name" value="NADHdh"/>
    <property type="match status" value="1"/>
</dbReference>
<dbReference type="PROSITE" id="PS00667">
    <property type="entry name" value="COMPLEX1_ND1_1"/>
    <property type="match status" value="1"/>
</dbReference>
<dbReference type="PROSITE" id="PS00668">
    <property type="entry name" value="COMPLEX1_ND1_2"/>
    <property type="match status" value="1"/>
</dbReference>
<sequence length="328" mass="35984">MSWWTPQVAAIAFALFQAVVILLAAVGAAALLTMVERRLLGLWQDRHGPNRVGPFGVLQIVADMLKIVFKEDWIPPFADRGLFVLAPAIAMASLLLSFMVIPITPSWGVADLHIGLLFFFAMAGINVYAVLFAGWSSGNKYALLGAMRASAQTLSYEVFMGLSLMGVVAMAGSFNMREIVAAQETLWFIVPQFFGFCTFLVAGIAVTHRHPFDQPEAEQELADGYHIEYSGMKWGMFFVGEYVGIVLVSALMVTLFLGGWHGPWLPPIVWFLLKTAVFVGFFILLRAALPRPRYDAVMSFGWKVCLPLTLINLLVTGALILIFSPAGG</sequence>
<comment type="function">
    <text evidence="1">NDH-1 shuttles electrons from NADH, via FMN and iron-sulfur (Fe-S) centers, to quinones in the respiratory chain. The immediate electron acceptor for the enzyme in this species is believed to be ubiquinone. Couples the redox reaction to proton translocation (for every two electrons transferred, four hydrogen ions are translocated across the cytoplasmic membrane), and thus conserves the redox energy in a proton gradient. This subunit may bind ubiquinone.</text>
</comment>
<comment type="catalytic activity">
    <reaction evidence="1">
        <text>a quinone + NADH + 5 H(+)(in) = a quinol + NAD(+) + 4 H(+)(out)</text>
        <dbReference type="Rhea" id="RHEA:57888"/>
        <dbReference type="ChEBI" id="CHEBI:15378"/>
        <dbReference type="ChEBI" id="CHEBI:24646"/>
        <dbReference type="ChEBI" id="CHEBI:57540"/>
        <dbReference type="ChEBI" id="CHEBI:57945"/>
        <dbReference type="ChEBI" id="CHEBI:132124"/>
    </reaction>
</comment>
<comment type="subunit">
    <text evidence="1">NDH-1 is composed of 14 different subunits. Subunits NuoA, H, J, K, L, M, N constitute the membrane sector of the complex.</text>
</comment>
<comment type="subcellular location">
    <subcellularLocation>
        <location evidence="1">Cell inner membrane</location>
        <topology evidence="1">Multi-pass membrane protein</topology>
    </subcellularLocation>
</comment>
<comment type="similarity">
    <text evidence="1">Belongs to the complex I subunit 1 family.</text>
</comment>
<evidence type="ECO:0000255" key="1">
    <source>
        <dbReference type="HAMAP-Rule" id="MF_01350"/>
    </source>
</evidence>
<protein>
    <recommendedName>
        <fullName evidence="1">NADH-quinone oxidoreductase subunit H</fullName>
        <ecNumber evidence="1">7.1.1.-</ecNumber>
    </recommendedName>
    <alternativeName>
        <fullName evidence="1">NADH dehydrogenase I subunit H</fullName>
    </alternativeName>
    <alternativeName>
        <fullName evidence="1">NDH-1 subunit H</fullName>
    </alternativeName>
</protein>
<feature type="chain" id="PRO_0000298805" description="NADH-quinone oxidoreductase subunit H">
    <location>
        <begin position="1"/>
        <end position="328"/>
    </location>
</feature>
<feature type="transmembrane region" description="Helical" evidence="1">
    <location>
        <begin position="8"/>
        <end position="28"/>
    </location>
</feature>
<feature type="transmembrane region" description="Helical" evidence="1">
    <location>
        <begin position="81"/>
        <end position="101"/>
    </location>
</feature>
<feature type="transmembrane region" description="Helical" evidence="1">
    <location>
        <begin position="114"/>
        <end position="134"/>
    </location>
</feature>
<feature type="transmembrane region" description="Helical" evidence="1">
    <location>
        <begin position="154"/>
        <end position="174"/>
    </location>
</feature>
<feature type="transmembrane region" description="Helical" evidence="1">
    <location>
        <begin position="186"/>
        <end position="206"/>
    </location>
</feature>
<feature type="transmembrane region" description="Helical" evidence="1">
    <location>
        <begin position="237"/>
        <end position="257"/>
    </location>
</feature>
<feature type="transmembrane region" description="Helical" evidence="1">
    <location>
        <begin position="265"/>
        <end position="285"/>
    </location>
</feature>
<feature type="transmembrane region" description="Helical" evidence="1">
    <location>
        <begin position="304"/>
        <end position="324"/>
    </location>
</feature>
<keyword id="KW-0997">Cell inner membrane</keyword>
<keyword id="KW-1003">Cell membrane</keyword>
<keyword id="KW-0472">Membrane</keyword>
<keyword id="KW-0520">NAD</keyword>
<keyword id="KW-0874">Quinone</keyword>
<keyword id="KW-1185">Reference proteome</keyword>
<keyword id="KW-1278">Translocase</keyword>
<keyword id="KW-0812">Transmembrane</keyword>
<keyword id="KW-1133">Transmembrane helix</keyword>
<keyword id="KW-0830">Ubiquinone</keyword>
<accession>Q1QST8</accession>
<name>NUOH_CHRSD</name>